<dbReference type="EMBL" id="AJ511533">
    <property type="protein sequence ID" value="CAD54424.1"/>
    <property type="molecule type" value="Genomic_DNA"/>
</dbReference>
<dbReference type="RefSeq" id="NP_818783.1">
    <property type="nucleotide sequence ID" value="NC_004691.1"/>
</dbReference>
<dbReference type="SMR" id="Q85Q99"/>
<dbReference type="FunCoup" id="Q85Q99">
    <property type="interactions" value="276"/>
</dbReference>
<dbReference type="STRING" id="284593.Q85Q99"/>
<dbReference type="EnsemblFungi" id="CaglfMp09-T">
    <property type="protein sequence ID" value="CaglfMp09-T-p1"/>
    <property type="gene ID" value="CaglfMp09"/>
</dbReference>
<dbReference type="GeneID" id="807015"/>
<dbReference type="KEGG" id="cgr:807015"/>
<dbReference type="CGD" id="CAL0139480">
    <property type="gene designation" value="ATP6"/>
</dbReference>
<dbReference type="VEuPathDB" id="FungiDB:CaglfMp09"/>
<dbReference type="InParanoid" id="Q85Q99"/>
<dbReference type="GO" id="GO:0005743">
    <property type="term" value="C:mitochondrial inner membrane"/>
    <property type="evidence" value="ECO:0007669"/>
    <property type="project" value="UniProtKB-SubCell"/>
</dbReference>
<dbReference type="GO" id="GO:0045259">
    <property type="term" value="C:proton-transporting ATP synthase complex"/>
    <property type="evidence" value="ECO:0000266"/>
    <property type="project" value="CGD"/>
</dbReference>
<dbReference type="GO" id="GO:0046933">
    <property type="term" value="F:proton-transporting ATP synthase activity, rotational mechanism"/>
    <property type="evidence" value="ECO:0007669"/>
    <property type="project" value="EnsemblFungi"/>
</dbReference>
<dbReference type="GO" id="GO:0015986">
    <property type="term" value="P:proton motive force-driven ATP synthesis"/>
    <property type="evidence" value="ECO:0000266"/>
    <property type="project" value="CGD"/>
</dbReference>
<dbReference type="CDD" id="cd00310">
    <property type="entry name" value="ATP-synt_Fo_a_6"/>
    <property type="match status" value="1"/>
</dbReference>
<dbReference type="FunFam" id="1.20.120.220:FF:000003">
    <property type="entry name" value="ATP synthase subunit a"/>
    <property type="match status" value="1"/>
</dbReference>
<dbReference type="Gene3D" id="1.20.120.220">
    <property type="entry name" value="ATP synthase, F0 complex, subunit A"/>
    <property type="match status" value="1"/>
</dbReference>
<dbReference type="HAMAP" id="MF_01393">
    <property type="entry name" value="ATP_synth_a_bact"/>
    <property type="match status" value="1"/>
</dbReference>
<dbReference type="InterPro" id="IPR000568">
    <property type="entry name" value="ATP_synth_F0_asu"/>
</dbReference>
<dbReference type="InterPro" id="IPR023011">
    <property type="entry name" value="ATP_synth_F0_asu_AS"/>
</dbReference>
<dbReference type="InterPro" id="IPR045083">
    <property type="entry name" value="ATP_synth_F0_asu_bact/mt"/>
</dbReference>
<dbReference type="InterPro" id="IPR035908">
    <property type="entry name" value="F0_ATP_A_sf"/>
</dbReference>
<dbReference type="NCBIfam" id="TIGR01131">
    <property type="entry name" value="ATP_synt_6_or_A"/>
    <property type="match status" value="1"/>
</dbReference>
<dbReference type="PANTHER" id="PTHR11410">
    <property type="entry name" value="ATP SYNTHASE SUBUNIT A"/>
    <property type="match status" value="1"/>
</dbReference>
<dbReference type="PANTHER" id="PTHR11410:SF0">
    <property type="entry name" value="ATP SYNTHASE SUBUNIT A"/>
    <property type="match status" value="1"/>
</dbReference>
<dbReference type="Pfam" id="PF00119">
    <property type="entry name" value="ATP-synt_A"/>
    <property type="match status" value="1"/>
</dbReference>
<dbReference type="PRINTS" id="PR00123">
    <property type="entry name" value="ATPASEA"/>
</dbReference>
<dbReference type="SUPFAM" id="SSF81336">
    <property type="entry name" value="F1F0 ATP synthase subunit A"/>
    <property type="match status" value="1"/>
</dbReference>
<dbReference type="PROSITE" id="PS00449">
    <property type="entry name" value="ATPASE_A"/>
    <property type="match status" value="1"/>
</dbReference>
<reference key="1">
    <citation type="journal article" date="2003" name="FEBS Lett.">
        <title>The complete mitochondrial genome sequence of the pathogenic yeast Candida (Torulopsis) glabrata.</title>
        <authorList>
            <person name="Koszul R."/>
            <person name="Malpertuy A."/>
            <person name="Frangeul L."/>
            <person name="Bouchier C."/>
            <person name="Wincker P."/>
            <person name="Thierry A."/>
            <person name="Duthoy S."/>
            <person name="Ferris S."/>
            <person name="Hennequin C."/>
            <person name="Dujon B."/>
        </authorList>
    </citation>
    <scope>NUCLEOTIDE SEQUENCE [LARGE SCALE GENOMIC DNA]</scope>
    <source>
        <strain>ATCC 2001 / BCRC 20586 / JCM 3761 / NBRC 0622 / NRRL Y-65 / CBS 138</strain>
    </source>
</reference>
<protein>
    <recommendedName>
        <fullName>ATP synthase subunit a</fullName>
    </recommendedName>
    <alternativeName>
        <fullName>ATP synthase subunit 6</fullName>
    </alternativeName>
    <alternativeName>
        <fullName>F-ATPase protein 6</fullName>
    </alternativeName>
</protein>
<proteinExistence type="inferred from homology"/>
<feature type="propeptide" id="PRO_0000002608" description="Removed in mature form" evidence="1">
    <location>
        <begin position="1"/>
        <end position="11"/>
    </location>
</feature>
<feature type="chain" id="PRO_0000002609" description="ATP synthase subunit a">
    <location>
        <begin position="12"/>
        <end position="260"/>
    </location>
</feature>
<feature type="transmembrane region" description="Helical" evidence="2">
    <location>
        <begin position="37"/>
        <end position="57"/>
    </location>
</feature>
<feature type="transmembrane region" description="Helical" evidence="2">
    <location>
        <begin position="96"/>
        <end position="116"/>
    </location>
</feature>
<feature type="transmembrane region" description="Helical" evidence="2">
    <location>
        <begin position="126"/>
        <end position="146"/>
    </location>
</feature>
<feature type="transmembrane region" description="Helical" evidence="2">
    <location>
        <begin position="152"/>
        <end position="172"/>
    </location>
</feature>
<feature type="transmembrane region" description="Helical" evidence="2">
    <location>
        <begin position="192"/>
        <end position="212"/>
    </location>
</feature>
<feature type="transmembrane region" description="Helical" evidence="2">
    <location>
        <begin position="217"/>
        <end position="237"/>
    </location>
</feature>
<keyword id="KW-0066">ATP synthesis</keyword>
<keyword id="KW-0138">CF(0)</keyword>
<keyword id="KW-0375">Hydrogen ion transport</keyword>
<keyword id="KW-0406">Ion transport</keyword>
<keyword id="KW-0472">Membrane</keyword>
<keyword id="KW-0496">Mitochondrion</keyword>
<keyword id="KW-0999">Mitochondrion inner membrane</keyword>
<keyword id="KW-0812">Transmembrane</keyword>
<keyword id="KW-1133">Transmembrane helix</keyword>
<keyword id="KW-0813">Transport</keyword>
<gene>
    <name type="primary">ATP6</name>
</gene>
<evidence type="ECO:0000250" key="1"/>
<evidence type="ECO:0000255" key="2"/>
<evidence type="ECO:0000305" key="3"/>
<sequence>MQNTLLRTYINSPLEQFEVKTFLGLNTPFIDLSGLNITTFTLYTIIVLLVVSSLYVLSNNNNKIIGSRWLLSQEVIYDTILNMVKGQIKGKDWGYYFPFIYTLFMFILISNLISMIPYSYALTAQFVFIISLSMIIWLGITILSLFKHGWVFFSLFVPSGTALPLVPLLVVIELLSYVARAFSLGLRLSANIFSGHLLMAILAGLTMTFVQINIFTLILGFIPLAIILIIMCLEFGIAIIQAYVFSILASSYLKDGLYLH</sequence>
<name>ATP6_CANGA</name>
<organism>
    <name type="scientific">Candida glabrata (strain ATCC 2001 / BCRC 20586 / JCM 3761 / NBRC 0622 / NRRL Y-65 / CBS 138)</name>
    <name type="common">Yeast</name>
    <name type="synonym">Nakaseomyces glabratus</name>
    <dbReference type="NCBI Taxonomy" id="284593"/>
    <lineage>
        <taxon>Eukaryota</taxon>
        <taxon>Fungi</taxon>
        <taxon>Dikarya</taxon>
        <taxon>Ascomycota</taxon>
        <taxon>Saccharomycotina</taxon>
        <taxon>Saccharomycetes</taxon>
        <taxon>Saccharomycetales</taxon>
        <taxon>Saccharomycetaceae</taxon>
        <taxon>Nakaseomyces</taxon>
    </lineage>
</organism>
<geneLocation type="mitochondrion"/>
<accession>Q85Q99</accession>
<comment type="function">
    <text evidence="1">Mitochondrial membrane ATP synthase (F(1)F(0) ATP synthase or Complex V) produces ATP from ADP in the presence of a proton gradient across the membrane which is generated by electron transport complexes of the respiratory chain. F-type ATPases consist of two structural domains, F(1) - containing the extramembraneous catalytic core and F(0) - containing the membrane proton channel, linked together by a central stalk and a peripheral stalk. During catalysis, ATP synthesis in the catalytic domain of F(1) is coupled via a rotary mechanism of the central stalk subunits to proton translocation. Key component of the proton channel; it may play a direct role in the translocation of protons across the membrane (By similarity).</text>
</comment>
<comment type="subunit">
    <text evidence="1">F-type ATPases have 2 components, CF(1) - the catalytic core - and CF(0) - the membrane proton channel. CF(1) has five subunits: alpha(3), beta(3), gamma(1), delta(1), epsilon(1). CF(0) has three main subunits: a, b and c (By similarity).</text>
</comment>
<comment type="subcellular location">
    <subcellularLocation>
        <location>Mitochondrion inner membrane</location>
        <topology>Multi-pass membrane protein</topology>
    </subcellularLocation>
</comment>
<comment type="similarity">
    <text evidence="3">Belongs to the ATPase A chain family.</text>
</comment>